<comment type="function">
    <text evidence="1">RuBisCO catalyzes two reactions: the carboxylation of D-ribulose 1,5-bisphosphate, the primary event in carbon dioxide fixation, as well as the oxidative fragmentation of the pentose substrate. Both reactions occur simultaneously and in competition at the same active site. Although the small subunit is not catalytic it is essential for maximal activity.</text>
</comment>
<comment type="subunit">
    <text evidence="1">Heterohexadecamer of 8 large and 8 small subunits.</text>
</comment>
<comment type="subcellular location">
    <subcellularLocation>
        <location evidence="1">Plastid</location>
        <location evidence="1">Chloroplast</location>
    </subcellularLocation>
</comment>
<comment type="miscellaneous">
    <text evidence="1">The basic functional RuBisCO is composed of a large chain homodimer in a 'head-to-tail' conformation. In form I RuBisCO this homodimer is arranged in a barrel-like tetramer with the small subunits forming a tetrameric 'cap' on each end of the 'barrel'.</text>
</comment>
<comment type="similarity">
    <text evidence="1">Belongs to the RuBisCO small chain family.</text>
</comment>
<reference key="1">
    <citation type="submission" date="1993-12" db="EMBL/GenBank/DDBJ databases">
        <title>Characterization of two genes for isoforms of the small subunit of ribulose-1,5-bisphosphate carboxylase oxygenase (rbcS) from the marine unicellular green alga Acetabularia cliftonii (Dasycladales).</title>
        <authorList>
            <person name="Frank S."/>
            <person name="Menzel D."/>
        </authorList>
    </citation>
    <scope>NUCLEOTIDE SEQUENCE [GENOMIC DNA]</scope>
</reference>
<sequence>MAATMMSKTIISSKQCSKPIAPPKVSINKGFVNTSAAIKNREMMVWQPFNNKMFETFSYLPPLTDEQISKQVDYILANAWTPCLEFAASDQAYAGNENCITMGPVASTYQDNRYWTMWKLPMFGCTDGSQVLTEIQACTKAFPDAYIRLVCFDANRQVQISGFLVHRPPSATDYRLPADRQV</sequence>
<protein>
    <recommendedName>
        <fullName evidence="1">Ribulose bisphosphate carboxylase small subunit, chloroplastic 6</fullName>
        <shortName evidence="1">RuBisCO small subunit 6</shortName>
    </recommendedName>
    <alternativeName>
        <fullName>rbcS4</fullName>
    </alternativeName>
</protein>
<proteinExistence type="inferred from homology"/>
<name>RBS6_ACEPE</name>
<gene>
    <name evidence="1" type="primary">RBCS6</name>
    <name type="synonym">RBCS-6</name>
</gene>
<dbReference type="EMBL" id="Z28640">
    <property type="protein sequence ID" value="CAA82266.1"/>
    <property type="molecule type" value="Genomic_DNA"/>
</dbReference>
<dbReference type="SMR" id="Q38692"/>
<dbReference type="GO" id="GO:0009507">
    <property type="term" value="C:chloroplast"/>
    <property type="evidence" value="ECO:0007669"/>
    <property type="project" value="UniProtKB-SubCell"/>
</dbReference>
<dbReference type="GO" id="GO:0016984">
    <property type="term" value="F:ribulose-bisphosphate carboxylase activity"/>
    <property type="evidence" value="ECO:0007669"/>
    <property type="project" value="UniProtKB-UniRule"/>
</dbReference>
<dbReference type="GO" id="GO:0009853">
    <property type="term" value="P:photorespiration"/>
    <property type="evidence" value="ECO:0007669"/>
    <property type="project" value="UniProtKB-KW"/>
</dbReference>
<dbReference type="GO" id="GO:0019253">
    <property type="term" value="P:reductive pentose-phosphate cycle"/>
    <property type="evidence" value="ECO:0007669"/>
    <property type="project" value="UniProtKB-UniRule"/>
</dbReference>
<dbReference type="CDD" id="cd03527">
    <property type="entry name" value="RuBisCO_small"/>
    <property type="match status" value="1"/>
</dbReference>
<dbReference type="FunFam" id="3.30.190.10:FF:000001">
    <property type="entry name" value="Ribulose bisphosphate carboxylase small chain, chloroplastic"/>
    <property type="match status" value="1"/>
</dbReference>
<dbReference type="Gene3D" id="3.30.190.10">
    <property type="entry name" value="Ribulose bisphosphate carboxylase, small subunit"/>
    <property type="match status" value="1"/>
</dbReference>
<dbReference type="HAMAP" id="MF_00859">
    <property type="entry name" value="RuBisCO_S_bact"/>
    <property type="match status" value="1"/>
</dbReference>
<dbReference type="InterPro" id="IPR024681">
    <property type="entry name" value="RuBisCO_ssu"/>
</dbReference>
<dbReference type="InterPro" id="IPR000894">
    <property type="entry name" value="RuBisCO_ssu_dom"/>
</dbReference>
<dbReference type="InterPro" id="IPR036385">
    <property type="entry name" value="RuBisCO_ssu_sf"/>
</dbReference>
<dbReference type="PANTHER" id="PTHR31262">
    <property type="entry name" value="RIBULOSE BISPHOSPHATE CARBOXYLASE SMALL CHAIN 1, CHLOROPLASTIC"/>
    <property type="match status" value="1"/>
</dbReference>
<dbReference type="PANTHER" id="PTHR31262:SF0">
    <property type="entry name" value="RIBULOSE BISPHOSPHATE CARBOXYLASE SMALL SUBUNIT, CHLOROPLASTIC 1"/>
    <property type="match status" value="1"/>
</dbReference>
<dbReference type="Pfam" id="PF00101">
    <property type="entry name" value="RuBisCO_small"/>
    <property type="match status" value="1"/>
</dbReference>
<dbReference type="PRINTS" id="PR00152">
    <property type="entry name" value="RUBISCOSMALL"/>
</dbReference>
<dbReference type="SMART" id="SM00961">
    <property type="entry name" value="RuBisCO_small"/>
    <property type="match status" value="1"/>
</dbReference>
<dbReference type="SUPFAM" id="SSF55239">
    <property type="entry name" value="RuBisCO, small subunit"/>
    <property type="match status" value="1"/>
</dbReference>
<evidence type="ECO:0000255" key="1">
    <source>
        <dbReference type="HAMAP-Rule" id="MF_00860"/>
    </source>
</evidence>
<accession>Q38692</accession>
<feature type="transit peptide" description="Chloroplast" evidence="1">
    <location>
        <begin position="1"/>
        <end position="41"/>
    </location>
</feature>
<feature type="chain" id="PRO_0000031452" description="Ribulose bisphosphate carboxylase small subunit, chloroplastic 6" evidence="1">
    <location>
        <begin position="42"/>
        <end position="182"/>
    </location>
</feature>
<organism>
    <name type="scientific">Acetabularia peniculus</name>
    <name type="common">Green alga</name>
    <name type="synonym">Polyphysa peniculus</name>
    <dbReference type="NCBI Taxonomy" id="35862"/>
    <lineage>
        <taxon>Eukaryota</taxon>
        <taxon>Viridiplantae</taxon>
        <taxon>Chlorophyta</taxon>
        <taxon>Ulvophyceae</taxon>
        <taxon>TCBD clade</taxon>
        <taxon>Dasycladales</taxon>
        <taxon>Polyphysaceae</taxon>
        <taxon>Acetabularia</taxon>
    </lineage>
</organism>
<keyword id="KW-0113">Calvin cycle</keyword>
<keyword id="KW-0120">Carbon dioxide fixation</keyword>
<keyword id="KW-0150">Chloroplast</keyword>
<keyword id="KW-0601">Photorespiration</keyword>
<keyword id="KW-0602">Photosynthesis</keyword>
<keyword id="KW-0934">Plastid</keyword>
<keyword id="KW-0809">Transit peptide</keyword>